<accession>B5XQ92</accession>
<organism>
    <name type="scientific">Klebsiella pneumoniae (strain 342)</name>
    <dbReference type="NCBI Taxonomy" id="507522"/>
    <lineage>
        <taxon>Bacteria</taxon>
        <taxon>Pseudomonadati</taxon>
        <taxon>Pseudomonadota</taxon>
        <taxon>Gammaproteobacteria</taxon>
        <taxon>Enterobacterales</taxon>
        <taxon>Enterobacteriaceae</taxon>
        <taxon>Klebsiella/Raoultella group</taxon>
        <taxon>Klebsiella</taxon>
        <taxon>Klebsiella pneumoniae complex</taxon>
    </lineage>
</organism>
<protein>
    <recommendedName>
        <fullName evidence="1">UPF0225 protein KPK_2103</fullName>
    </recommendedName>
</protein>
<comment type="similarity">
    <text evidence="1">Belongs to the UPF0225 family.</text>
</comment>
<dbReference type="EMBL" id="CP000964">
    <property type="protein sequence ID" value="ACI10661.1"/>
    <property type="molecule type" value="Genomic_DNA"/>
</dbReference>
<dbReference type="SMR" id="B5XQ92"/>
<dbReference type="KEGG" id="kpe:KPK_2103"/>
<dbReference type="HOGENOM" id="CLU_099590_0_0_6"/>
<dbReference type="BioCyc" id="KPNE507522:GI0B-2097-MONOMER"/>
<dbReference type="Proteomes" id="UP000001734">
    <property type="component" value="Chromosome"/>
</dbReference>
<dbReference type="Gene3D" id="3.10.450.50">
    <property type="match status" value="1"/>
</dbReference>
<dbReference type="HAMAP" id="MF_00612">
    <property type="entry name" value="UPF0225"/>
    <property type="match status" value="1"/>
</dbReference>
<dbReference type="InterPro" id="IPR032710">
    <property type="entry name" value="NTF2-like_dom_sf"/>
</dbReference>
<dbReference type="InterPro" id="IPR004027">
    <property type="entry name" value="SEC_C_motif"/>
</dbReference>
<dbReference type="InterPro" id="IPR023006">
    <property type="entry name" value="UPF0225"/>
</dbReference>
<dbReference type="InterPro" id="IPR048469">
    <property type="entry name" value="YchJ-like_M"/>
</dbReference>
<dbReference type="NCBIfam" id="NF002449">
    <property type="entry name" value="PRK01617.1"/>
    <property type="match status" value="1"/>
</dbReference>
<dbReference type="NCBIfam" id="NF002486">
    <property type="entry name" value="PRK01752.1"/>
    <property type="match status" value="1"/>
</dbReference>
<dbReference type="PANTHER" id="PTHR33747:SF1">
    <property type="entry name" value="ADENYLATE CYCLASE-ASSOCIATED CAP C-TERMINAL DOMAIN-CONTAINING PROTEIN"/>
    <property type="match status" value="1"/>
</dbReference>
<dbReference type="PANTHER" id="PTHR33747">
    <property type="entry name" value="UPF0225 PROTEIN SCO1677"/>
    <property type="match status" value="1"/>
</dbReference>
<dbReference type="Pfam" id="PF02810">
    <property type="entry name" value="SEC-C"/>
    <property type="match status" value="2"/>
</dbReference>
<dbReference type="Pfam" id="PF17775">
    <property type="entry name" value="YchJ_M-like"/>
    <property type="match status" value="1"/>
</dbReference>
<dbReference type="SUPFAM" id="SSF54427">
    <property type="entry name" value="NTF2-like"/>
    <property type="match status" value="1"/>
</dbReference>
<dbReference type="SUPFAM" id="SSF103642">
    <property type="entry name" value="Sec-C motif"/>
    <property type="match status" value="1"/>
</dbReference>
<sequence>MSQLCPCGSALEYSSCCQRYLSGAELAPGPSQLMRSRYSAFVMKDADYLIKTWHPSCQAQTFRAELEKGFSQTEWLGLTLFASDERRVPNEGFASFVARFNDNNRPGAIIERSRFLKENGQWYYIDGTRPLIGRNDPCPCGSGKKFKKCCGQ</sequence>
<gene>
    <name type="ordered locus">KPK_2103</name>
</gene>
<evidence type="ECO:0000255" key="1">
    <source>
        <dbReference type="HAMAP-Rule" id="MF_00612"/>
    </source>
</evidence>
<feature type="chain" id="PRO_1000130388" description="UPF0225 protein KPK_2103">
    <location>
        <begin position="1"/>
        <end position="152"/>
    </location>
</feature>
<reference key="1">
    <citation type="journal article" date="2008" name="PLoS Genet.">
        <title>Complete genome sequence of the N2-fixing broad host range endophyte Klebsiella pneumoniae 342 and virulence predictions verified in mice.</title>
        <authorList>
            <person name="Fouts D.E."/>
            <person name="Tyler H.L."/>
            <person name="DeBoy R.T."/>
            <person name="Daugherty S."/>
            <person name="Ren Q."/>
            <person name="Badger J.H."/>
            <person name="Durkin A.S."/>
            <person name="Huot H."/>
            <person name="Shrivastava S."/>
            <person name="Kothari S."/>
            <person name="Dodson R.J."/>
            <person name="Mohamoud Y."/>
            <person name="Khouri H."/>
            <person name="Roesch L.F.W."/>
            <person name="Krogfelt K.A."/>
            <person name="Struve C."/>
            <person name="Triplett E.W."/>
            <person name="Methe B.A."/>
        </authorList>
    </citation>
    <scope>NUCLEOTIDE SEQUENCE [LARGE SCALE GENOMIC DNA]</scope>
    <source>
        <strain>342</strain>
    </source>
</reference>
<proteinExistence type="inferred from homology"/>
<name>Y2103_KLEP3</name>